<reference key="1">
    <citation type="submission" date="2008-02" db="EMBL/GenBank/DDBJ databases">
        <title>Complete sequence of Escherichia coli C str. ATCC 8739.</title>
        <authorList>
            <person name="Copeland A."/>
            <person name="Lucas S."/>
            <person name="Lapidus A."/>
            <person name="Glavina del Rio T."/>
            <person name="Dalin E."/>
            <person name="Tice H."/>
            <person name="Bruce D."/>
            <person name="Goodwin L."/>
            <person name="Pitluck S."/>
            <person name="Kiss H."/>
            <person name="Brettin T."/>
            <person name="Detter J.C."/>
            <person name="Han C."/>
            <person name="Kuske C.R."/>
            <person name="Schmutz J."/>
            <person name="Larimer F."/>
            <person name="Land M."/>
            <person name="Hauser L."/>
            <person name="Kyrpides N."/>
            <person name="Mikhailova N."/>
            <person name="Ingram L."/>
            <person name="Richardson P."/>
        </authorList>
    </citation>
    <scope>NUCLEOTIDE SEQUENCE [LARGE SCALE GENOMIC DNA]</scope>
    <source>
        <strain>ATCC 8739 / DSM 1576 / NBRC 3972 / NCIMB 8545 / WDCM 00012 / Crooks</strain>
    </source>
</reference>
<keyword id="KW-0997">Cell inner membrane</keyword>
<keyword id="KW-1003">Cell membrane</keyword>
<keyword id="KW-0342">GTP-binding</keyword>
<keyword id="KW-0378">Hydrolase</keyword>
<keyword id="KW-0472">Membrane</keyword>
<keyword id="KW-0547">Nucleotide-binding</keyword>
<keyword id="KW-0648">Protein biosynthesis</keyword>
<sequence>MKNIRNFSIIAHIDHGKSTLSDRIIQICGGLSDREMEAQVLDSMDLERERGITIKAQSVTLDYKASDGETYQLNFIDTPGHVDFSYEVSRSLAACEGALLVVDAGQGVEAQTLANCYTAMEMDLEVVPVLNKIDLPAADPERVAEEIEDIVGIDATDAVRCSAKTGVGVQDVLERLVRDIPPPEGDPEGPLQALIIDSWFDNYLGVVSLIRIKNGTLRKGDKVKVMSTGQTYNADRLGIFTPKQVDRTELKCGEVGWLVCAIKDIHGAPVGDTLTLARNPAEKALPGFKKVKPQVYAGLFPVSSDDYEAFRDALGKLSLNDASLFYEPESSSALGFGFRCGFLGLLHMEIIQERLEREYDLDLITTAPTVVYEVETTSREVIYVDSPSKLPAVNNIYELREPIAECHMLLPQAYLGNVITLCVEKRGVQTNMVYHGNQVALTYEIPMAEVVLDFFDRLKSTSRGYASLDYNFKRFQASDMVRVDVLINGERVDALALITHRDNSQNRGRELVEKMKDLIPRQQFDIAIQAAIGTHIIARSTVKQLRKNVLAKCYGGDISRKKKLLQKQKEGKKRMKQIGNVELPQEAFLAILHVGKDNK</sequence>
<feature type="chain" id="PRO_1000075132" description="Elongation factor 4">
    <location>
        <begin position="1"/>
        <end position="599"/>
    </location>
</feature>
<feature type="domain" description="tr-type G">
    <location>
        <begin position="2"/>
        <end position="184"/>
    </location>
</feature>
<feature type="binding site" evidence="1">
    <location>
        <begin position="14"/>
        <end position="19"/>
    </location>
    <ligand>
        <name>GTP</name>
        <dbReference type="ChEBI" id="CHEBI:37565"/>
    </ligand>
</feature>
<feature type="binding site" evidence="1">
    <location>
        <begin position="131"/>
        <end position="134"/>
    </location>
    <ligand>
        <name>GTP</name>
        <dbReference type="ChEBI" id="CHEBI:37565"/>
    </ligand>
</feature>
<proteinExistence type="inferred from homology"/>
<evidence type="ECO:0000255" key="1">
    <source>
        <dbReference type="HAMAP-Rule" id="MF_00071"/>
    </source>
</evidence>
<gene>
    <name evidence="1" type="primary">lepA</name>
    <name type="ordered locus">EcolC_1108</name>
</gene>
<organism>
    <name type="scientific">Escherichia coli (strain ATCC 8739 / DSM 1576 / NBRC 3972 / NCIMB 8545 / WDCM 00012 / Crooks)</name>
    <dbReference type="NCBI Taxonomy" id="481805"/>
    <lineage>
        <taxon>Bacteria</taxon>
        <taxon>Pseudomonadati</taxon>
        <taxon>Pseudomonadota</taxon>
        <taxon>Gammaproteobacteria</taxon>
        <taxon>Enterobacterales</taxon>
        <taxon>Enterobacteriaceae</taxon>
        <taxon>Escherichia</taxon>
    </lineage>
</organism>
<protein>
    <recommendedName>
        <fullName evidence="1">Elongation factor 4</fullName>
        <shortName evidence="1">EF-4</shortName>
        <ecNumber evidence="1">3.6.5.n1</ecNumber>
    </recommendedName>
    <alternativeName>
        <fullName evidence="1">Ribosomal back-translocase LepA</fullName>
    </alternativeName>
</protein>
<name>LEPA_ECOLC</name>
<accession>B1IVQ8</accession>
<comment type="function">
    <text evidence="1">Required for accurate and efficient protein synthesis under certain stress conditions. May act as a fidelity factor of the translation reaction, by catalyzing a one-codon backward translocation of tRNAs on improperly translocated ribosomes. Back-translocation proceeds from a post-translocation (POST) complex to a pre-translocation (PRE) complex, thus giving elongation factor G a second chance to translocate the tRNAs correctly. Binds to ribosomes in a GTP-dependent manner.</text>
</comment>
<comment type="catalytic activity">
    <reaction evidence="1">
        <text>GTP + H2O = GDP + phosphate + H(+)</text>
        <dbReference type="Rhea" id="RHEA:19669"/>
        <dbReference type="ChEBI" id="CHEBI:15377"/>
        <dbReference type="ChEBI" id="CHEBI:15378"/>
        <dbReference type="ChEBI" id="CHEBI:37565"/>
        <dbReference type="ChEBI" id="CHEBI:43474"/>
        <dbReference type="ChEBI" id="CHEBI:58189"/>
        <dbReference type="EC" id="3.6.5.n1"/>
    </reaction>
</comment>
<comment type="subcellular location">
    <subcellularLocation>
        <location evidence="1">Cell inner membrane</location>
        <topology evidence="1">Peripheral membrane protein</topology>
        <orientation evidence="1">Cytoplasmic side</orientation>
    </subcellularLocation>
</comment>
<comment type="similarity">
    <text evidence="1">Belongs to the TRAFAC class translation factor GTPase superfamily. Classic translation factor GTPase family. LepA subfamily.</text>
</comment>
<dbReference type="EC" id="3.6.5.n1" evidence="1"/>
<dbReference type="EMBL" id="CP000946">
    <property type="protein sequence ID" value="ACA76775.1"/>
    <property type="molecule type" value="Genomic_DNA"/>
</dbReference>
<dbReference type="RefSeq" id="WP_000790168.1">
    <property type="nucleotide sequence ID" value="NZ_MTFT01000002.1"/>
</dbReference>
<dbReference type="SMR" id="B1IVQ8"/>
<dbReference type="GeneID" id="93774522"/>
<dbReference type="KEGG" id="ecl:EcolC_1108"/>
<dbReference type="HOGENOM" id="CLU_009995_3_3_6"/>
<dbReference type="GO" id="GO:0005886">
    <property type="term" value="C:plasma membrane"/>
    <property type="evidence" value="ECO:0007669"/>
    <property type="project" value="UniProtKB-SubCell"/>
</dbReference>
<dbReference type="GO" id="GO:0005525">
    <property type="term" value="F:GTP binding"/>
    <property type="evidence" value="ECO:0007669"/>
    <property type="project" value="UniProtKB-UniRule"/>
</dbReference>
<dbReference type="GO" id="GO:0003924">
    <property type="term" value="F:GTPase activity"/>
    <property type="evidence" value="ECO:0007669"/>
    <property type="project" value="UniProtKB-UniRule"/>
</dbReference>
<dbReference type="GO" id="GO:0097216">
    <property type="term" value="F:guanosine tetraphosphate binding"/>
    <property type="evidence" value="ECO:0007669"/>
    <property type="project" value="UniProtKB-ARBA"/>
</dbReference>
<dbReference type="GO" id="GO:0043022">
    <property type="term" value="F:ribosome binding"/>
    <property type="evidence" value="ECO:0007669"/>
    <property type="project" value="UniProtKB-UniRule"/>
</dbReference>
<dbReference type="GO" id="GO:0003746">
    <property type="term" value="F:translation elongation factor activity"/>
    <property type="evidence" value="ECO:0007669"/>
    <property type="project" value="UniProtKB-UniRule"/>
</dbReference>
<dbReference type="GO" id="GO:0045727">
    <property type="term" value="P:positive regulation of translation"/>
    <property type="evidence" value="ECO:0007669"/>
    <property type="project" value="UniProtKB-UniRule"/>
</dbReference>
<dbReference type="CDD" id="cd03699">
    <property type="entry name" value="EF4_II"/>
    <property type="match status" value="1"/>
</dbReference>
<dbReference type="CDD" id="cd16260">
    <property type="entry name" value="EF4_III"/>
    <property type="match status" value="1"/>
</dbReference>
<dbReference type="CDD" id="cd01890">
    <property type="entry name" value="LepA"/>
    <property type="match status" value="1"/>
</dbReference>
<dbReference type="CDD" id="cd03709">
    <property type="entry name" value="lepA_C"/>
    <property type="match status" value="1"/>
</dbReference>
<dbReference type="FunFam" id="3.30.70.240:FF:000005">
    <property type="entry name" value="Elongation factor 4"/>
    <property type="match status" value="1"/>
</dbReference>
<dbReference type="FunFam" id="3.40.50.300:FF:000078">
    <property type="entry name" value="Elongation factor 4"/>
    <property type="match status" value="1"/>
</dbReference>
<dbReference type="FunFam" id="2.40.30.10:FF:000015">
    <property type="entry name" value="Translation factor GUF1, mitochondrial"/>
    <property type="match status" value="1"/>
</dbReference>
<dbReference type="FunFam" id="3.30.70.2570:FF:000001">
    <property type="entry name" value="Translation factor GUF1, mitochondrial"/>
    <property type="match status" value="1"/>
</dbReference>
<dbReference type="FunFam" id="3.30.70.870:FF:000004">
    <property type="entry name" value="Translation factor GUF1, mitochondrial"/>
    <property type="match status" value="1"/>
</dbReference>
<dbReference type="Gene3D" id="3.30.70.240">
    <property type="match status" value="1"/>
</dbReference>
<dbReference type="Gene3D" id="3.30.70.2570">
    <property type="entry name" value="Elongation factor 4, C-terminal domain"/>
    <property type="match status" value="1"/>
</dbReference>
<dbReference type="Gene3D" id="3.30.70.870">
    <property type="entry name" value="Elongation Factor G (Translational Gtpase), domain 3"/>
    <property type="match status" value="1"/>
</dbReference>
<dbReference type="Gene3D" id="3.40.50.300">
    <property type="entry name" value="P-loop containing nucleotide triphosphate hydrolases"/>
    <property type="match status" value="1"/>
</dbReference>
<dbReference type="Gene3D" id="2.40.30.10">
    <property type="entry name" value="Translation factors"/>
    <property type="match status" value="1"/>
</dbReference>
<dbReference type="HAMAP" id="MF_00071">
    <property type="entry name" value="LepA"/>
    <property type="match status" value="1"/>
</dbReference>
<dbReference type="InterPro" id="IPR006297">
    <property type="entry name" value="EF-4"/>
</dbReference>
<dbReference type="InterPro" id="IPR035647">
    <property type="entry name" value="EFG_III/V"/>
</dbReference>
<dbReference type="InterPro" id="IPR000640">
    <property type="entry name" value="EFG_V-like"/>
</dbReference>
<dbReference type="InterPro" id="IPR004161">
    <property type="entry name" value="EFTu-like_2"/>
</dbReference>
<dbReference type="InterPro" id="IPR031157">
    <property type="entry name" value="G_TR_CS"/>
</dbReference>
<dbReference type="InterPro" id="IPR038363">
    <property type="entry name" value="LepA_C_sf"/>
</dbReference>
<dbReference type="InterPro" id="IPR013842">
    <property type="entry name" value="LepA_CTD"/>
</dbReference>
<dbReference type="InterPro" id="IPR035654">
    <property type="entry name" value="LepA_IV"/>
</dbReference>
<dbReference type="InterPro" id="IPR027417">
    <property type="entry name" value="P-loop_NTPase"/>
</dbReference>
<dbReference type="InterPro" id="IPR005225">
    <property type="entry name" value="Small_GTP-bd"/>
</dbReference>
<dbReference type="InterPro" id="IPR000795">
    <property type="entry name" value="T_Tr_GTP-bd_dom"/>
</dbReference>
<dbReference type="NCBIfam" id="TIGR01393">
    <property type="entry name" value="lepA"/>
    <property type="match status" value="1"/>
</dbReference>
<dbReference type="NCBIfam" id="TIGR00231">
    <property type="entry name" value="small_GTP"/>
    <property type="match status" value="1"/>
</dbReference>
<dbReference type="PANTHER" id="PTHR43512:SF4">
    <property type="entry name" value="TRANSLATION FACTOR GUF1 HOMOLOG, CHLOROPLASTIC"/>
    <property type="match status" value="1"/>
</dbReference>
<dbReference type="PANTHER" id="PTHR43512">
    <property type="entry name" value="TRANSLATION FACTOR GUF1-RELATED"/>
    <property type="match status" value="1"/>
</dbReference>
<dbReference type="Pfam" id="PF00679">
    <property type="entry name" value="EFG_C"/>
    <property type="match status" value="1"/>
</dbReference>
<dbReference type="Pfam" id="PF00009">
    <property type="entry name" value="GTP_EFTU"/>
    <property type="match status" value="1"/>
</dbReference>
<dbReference type="Pfam" id="PF03144">
    <property type="entry name" value="GTP_EFTU_D2"/>
    <property type="match status" value="1"/>
</dbReference>
<dbReference type="Pfam" id="PF06421">
    <property type="entry name" value="LepA_C"/>
    <property type="match status" value="1"/>
</dbReference>
<dbReference type="PRINTS" id="PR00315">
    <property type="entry name" value="ELONGATNFCT"/>
</dbReference>
<dbReference type="SUPFAM" id="SSF54980">
    <property type="entry name" value="EF-G C-terminal domain-like"/>
    <property type="match status" value="2"/>
</dbReference>
<dbReference type="SUPFAM" id="SSF52540">
    <property type="entry name" value="P-loop containing nucleoside triphosphate hydrolases"/>
    <property type="match status" value="1"/>
</dbReference>
<dbReference type="PROSITE" id="PS00301">
    <property type="entry name" value="G_TR_1"/>
    <property type="match status" value="1"/>
</dbReference>
<dbReference type="PROSITE" id="PS51722">
    <property type="entry name" value="G_TR_2"/>
    <property type="match status" value="1"/>
</dbReference>